<protein>
    <recommendedName>
        <fullName>Phosphatidylinositol 3-kinase regulatory subunit gamma</fullName>
        <shortName>PI3-kinase regulatory subunit gamma</shortName>
        <shortName>PI3K regulatory subunit gamma</shortName>
        <shortName>PtdIns-3-kinase regulatory subunit gamma</shortName>
    </recommendedName>
    <alternativeName>
        <fullName>Phosphatidylinositol 3-kinase 55 kDa regulatory subunit gamma</fullName>
        <shortName>PI3-kinase subunit p55-gamma</shortName>
        <shortName>PtdIns-3-kinase regulatory subunit p55-gamma</shortName>
    </alternativeName>
    <alternativeName>
        <fullName>p55PIK</fullName>
    </alternativeName>
</protein>
<reference key="1">
    <citation type="journal article" date="1996" name="J. Biol. Chem.">
        <title>A novel 55-kDa regulatory subunit for phosphatidylinositol 3-kinase structurally similar to p55PIK is generated by alternative splicing of the p85alpha gene.</title>
        <authorList>
            <person name="Inukai K."/>
            <person name="Anai M."/>
            <person name="van Breda E."/>
            <person name="Hosaka T."/>
            <person name="Katagiri H."/>
            <person name="Funaki M."/>
            <person name="Fukushima Y."/>
            <person name="Ogihara T."/>
            <person name="Yazaki Y."/>
            <person name="Kikuchi M."/>
            <person name="Oka Y."/>
            <person name="Asano T."/>
        </authorList>
    </citation>
    <scope>NUCLEOTIDE SEQUENCE [MRNA]</scope>
    <source>
        <strain>Wistar</strain>
        <tissue>Brain</tissue>
    </source>
</reference>
<evidence type="ECO:0000250" key="1"/>
<evidence type="ECO:0000250" key="2">
    <source>
        <dbReference type="UniProtKB" id="Q64143"/>
    </source>
</evidence>
<evidence type="ECO:0000255" key="3">
    <source>
        <dbReference type="PROSITE-ProRule" id="PRU00191"/>
    </source>
</evidence>
<evidence type="ECO:0000305" key="4"/>
<proteinExistence type="evidence at transcript level"/>
<accession>Q63789</accession>
<feature type="chain" id="PRO_0000080769" description="Phosphatidylinositol 3-kinase regulatory subunit gamma">
    <location>
        <begin position="1"/>
        <end position="461"/>
    </location>
</feature>
<feature type="domain" description="SH2 1" evidence="3">
    <location>
        <begin position="65"/>
        <end position="163"/>
    </location>
</feature>
<feature type="domain" description="SH2 2" evidence="3">
    <location>
        <begin position="358"/>
        <end position="455"/>
    </location>
</feature>
<feature type="modified residue" description="Phosphotyrosine" evidence="2">
    <location>
        <position position="341"/>
    </location>
</feature>
<name>P55G_RAT</name>
<organism>
    <name type="scientific">Rattus norvegicus</name>
    <name type="common">Rat</name>
    <dbReference type="NCBI Taxonomy" id="10116"/>
    <lineage>
        <taxon>Eukaryota</taxon>
        <taxon>Metazoa</taxon>
        <taxon>Chordata</taxon>
        <taxon>Craniata</taxon>
        <taxon>Vertebrata</taxon>
        <taxon>Euteleostomi</taxon>
        <taxon>Mammalia</taxon>
        <taxon>Eutheria</taxon>
        <taxon>Euarchontoglires</taxon>
        <taxon>Glires</taxon>
        <taxon>Rodentia</taxon>
        <taxon>Myomorpha</taxon>
        <taxon>Muroidea</taxon>
        <taxon>Muridae</taxon>
        <taxon>Murinae</taxon>
        <taxon>Rattus</taxon>
    </lineage>
</organism>
<sequence>MYNTVWSMDRDDADWREVMMPYSTELIFYIEMDPPALPPKPPKPVTSAVTNGMKDCFVSLQDAEWYWGDISREEVNDKLRDMPDGTFLVRDASTKMQGDYTLTLRKGGNNKLIKIYHRDGNYGFSEPLTFNSVVELINHYHHESLAQYNPKLDVKLMYPVSRYQQDQLVKEDNIDAVGKNLQEFHSQYQEKSKEYDRLYEEYTRTSQEIQMKRTAIEAFNETIKIFEEQCHTQEQHSKDYIERFRREGNEKEIERIMMNYDKLKSRLGEIHDSKVRLEQDLKKQALDNREIDKKMNSIKPDLIQLRKIRDQHLVWLNHRGVRQRRLNAWLGIKSEDTDESYFINEDDESLPHYDEKTWFVEDVNRVQAEDLLYGKPDGAFLIRESSKKGCYACSVVADGEVKPCVIYSPARGYGFAEPYNLYGSLKELVLHYQQTSLVQHNDSLNVTLAYPVHAQMPSLCR</sequence>
<keyword id="KW-0597">Phosphoprotein</keyword>
<keyword id="KW-1185">Reference proteome</keyword>
<keyword id="KW-0677">Repeat</keyword>
<keyword id="KW-0727">SH2 domain</keyword>
<comment type="function">
    <text>Binds to activated (phosphorylated) protein-tyrosine kinases through its SH2 domain and regulates their kinase activity. During insulin stimulation, it also binds to IRS-1.</text>
</comment>
<comment type="subunit">
    <text evidence="1">Heterodimer of a regulatory subunit PIK3R3 and a p110 catalytic subunit (PIK3CA, PIK3CB or PIK3CD). Interacts with AXL (By similarity).</text>
</comment>
<comment type="tissue specificity">
    <text>Highest levels in brain and testis. Lower levels in adipose tissue, kidney, heart, lung and skeletal muscle. Barely detectable in liver and spleen.</text>
</comment>
<comment type="similarity">
    <text evidence="4">Belongs to the PI3K p85 subunit family.</text>
</comment>
<dbReference type="EMBL" id="D64047">
    <property type="protein sequence ID" value="BAA10927.1"/>
    <property type="molecule type" value="mRNA"/>
</dbReference>
<dbReference type="RefSeq" id="NP_071549.1">
    <property type="nucleotide sequence ID" value="NM_022213.1"/>
</dbReference>
<dbReference type="SMR" id="Q63789"/>
<dbReference type="FunCoup" id="Q63789">
    <property type="interactions" value="2089"/>
</dbReference>
<dbReference type="STRING" id="10116.ENSRNOP00000000157"/>
<dbReference type="iPTMnet" id="Q63789"/>
<dbReference type="PhosphoSitePlus" id="Q63789"/>
<dbReference type="PaxDb" id="10116-ENSRNOP00000000157"/>
<dbReference type="GeneID" id="60664"/>
<dbReference type="KEGG" id="rno:60664"/>
<dbReference type="UCSC" id="RGD:621042">
    <property type="organism name" value="rat"/>
</dbReference>
<dbReference type="AGR" id="RGD:621042"/>
<dbReference type="CTD" id="8503"/>
<dbReference type="RGD" id="621042">
    <property type="gene designation" value="Pik3r3"/>
</dbReference>
<dbReference type="eggNOG" id="KOG4637">
    <property type="taxonomic scope" value="Eukaryota"/>
</dbReference>
<dbReference type="InParanoid" id="Q63789"/>
<dbReference type="OrthoDB" id="3175255at2759"/>
<dbReference type="PhylomeDB" id="Q63789"/>
<dbReference type="Reactome" id="R-RNO-114604">
    <property type="pathway name" value="GPVI-mediated activation cascade"/>
</dbReference>
<dbReference type="Reactome" id="R-RNO-1257604">
    <property type="pathway name" value="PIP3 activates AKT signaling"/>
</dbReference>
<dbReference type="Reactome" id="R-RNO-1266695">
    <property type="pathway name" value="Interleukin-7 signaling"/>
</dbReference>
<dbReference type="Reactome" id="R-RNO-1433557">
    <property type="pathway name" value="Signaling by SCF-KIT"/>
</dbReference>
<dbReference type="Reactome" id="R-RNO-1660499">
    <property type="pathway name" value="Synthesis of PIPs at the plasma membrane"/>
</dbReference>
<dbReference type="Reactome" id="R-RNO-389357">
    <property type="pathway name" value="CD28 dependent PI3K/Akt signaling"/>
</dbReference>
<dbReference type="Reactome" id="R-RNO-416476">
    <property type="pathway name" value="G alpha (q) signalling events"/>
</dbReference>
<dbReference type="Reactome" id="R-RNO-512988">
    <property type="pathway name" value="Interleukin-3, Interleukin-5 and GM-CSF signaling"/>
</dbReference>
<dbReference type="Reactome" id="R-RNO-6811558">
    <property type="pathway name" value="PI5P, PP2A and IER3 Regulate PI3K/AKT Signaling"/>
</dbReference>
<dbReference type="Reactome" id="R-RNO-8853659">
    <property type="pathway name" value="RET signaling"/>
</dbReference>
<dbReference type="Reactome" id="R-RNO-9009391">
    <property type="pathway name" value="Extra-nuclear estrogen signaling"/>
</dbReference>
<dbReference type="Reactome" id="R-RNO-9013149">
    <property type="pathway name" value="RAC1 GTPase cycle"/>
</dbReference>
<dbReference type="Reactome" id="R-RNO-9013404">
    <property type="pathway name" value="RAC2 GTPase cycle"/>
</dbReference>
<dbReference type="Reactome" id="R-RNO-912526">
    <property type="pathway name" value="Interleukin receptor SHC signaling"/>
</dbReference>
<dbReference type="Reactome" id="R-RNO-912631">
    <property type="pathway name" value="Regulation of signaling by CBL"/>
</dbReference>
<dbReference type="Reactome" id="R-RNO-9927354">
    <property type="pathway name" value="Co-stimulation by ICOS"/>
</dbReference>
<dbReference type="PRO" id="PR:Q63789"/>
<dbReference type="Proteomes" id="UP000002494">
    <property type="component" value="Unplaced"/>
</dbReference>
<dbReference type="GO" id="GO:0005942">
    <property type="term" value="C:phosphatidylinositol 3-kinase complex"/>
    <property type="evidence" value="ECO:0000266"/>
    <property type="project" value="RGD"/>
</dbReference>
<dbReference type="GO" id="GO:0005943">
    <property type="term" value="C:phosphatidylinositol 3-kinase complex, class IA"/>
    <property type="evidence" value="ECO:0000318"/>
    <property type="project" value="GO_Central"/>
</dbReference>
<dbReference type="GO" id="GO:0046935">
    <property type="term" value="F:1-phosphatidylinositol-3-kinase regulator activity"/>
    <property type="evidence" value="ECO:0000314"/>
    <property type="project" value="RGD"/>
</dbReference>
<dbReference type="GO" id="GO:0001784">
    <property type="term" value="F:phosphotyrosine residue binding"/>
    <property type="evidence" value="ECO:0000266"/>
    <property type="project" value="RGD"/>
</dbReference>
<dbReference type="GO" id="GO:0002042">
    <property type="term" value="P:cell migration involved in sprouting angiogenesis"/>
    <property type="evidence" value="ECO:0000266"/>
    <property type="project" value="RGD"/>
</dbReference>
<dbReference type="GO" id="GO:0008286">
    <property type="term" value="P:insulin receptor signaling pathway"/>
    <property type="evidence" value="ECO:0000266"/>
    <property type="project" value="RGD"/>
</dbReference>
<dbReference type="GO" id="GO:0043491">
    <property type="term" value="P:phosphatidylinositol 3-kinase/protein kinase B signal transduction"/>
    <property type="evidence" value="ECO:0000266"/>
    <property type="project" value="RGD"/>
</dbReference>
<dbReference type="GO" id="GO:0010628">
    <property type="term" value="P:positive regulation of gene expression"/>
    <property type="evidence" value="ECO:0000266"/>
    <property type="project" value="RGD"/>
</dbReference>
<dbReference type="CDD" id="cd09930">
    <property type="entry name" value="SH2_cSH2_p85_like"/>
    <property type="match status" value="1"/>
</dbReference>
<dbReference type="CDD" id="cd09942">
    <property type="entry name" value="SH2_nSH2_p85_like"/>
    <property type="match status" value="1"/>
</dbReference>
<dbReference type="FunFam" id="3.30.505.10:FF:000006">
    <property type="entry name" value="Phosphatidylinositol 3-kinase regulatory subunit alpha"/>
    <property type="match status" value="1"/>
</dbReference>
<dbReference type="FunFam" id="3.30.505.10:FF:000017">
    <property type="entry name" value="Phosphatidylinositol 3-kinase regulatory subunit gamma b"/>
    <property type="match status" value="1"/>
</dbReference>
<dbReference type="FunFam" id="1.10.287.1490:FF:000001">
    <property type="entry name" value="Putative phosphatidylinositol 3-kinase regulatory subunit alpha"/>
    <property type="match status" value="1"/>
</dbReference>
<dbReference type="Gene3D" id="1.10.287.1490">
    <property type="match status" value="1"/>
</dbReference>
<dbReference type="Gene3D" id="3.30.505.10">
    <property type="entry name" value="SH2 domain"/>
    <property type="match status" value="2"/>
</dbReference>
<dbReference type="InterPro" id="IPR032498">
    <property type="entry name" value="PI3K_P85_iSH2"/>
</dbReference>
<dbReference type="InterPro" id="IPR035020">
    <property type="entry name" value="PI3kinase_P85_cSH2"/>
</dbReference>
<dbReference type="InterPro" id="IPR035022">
    <property type="entry name" value="PI3kinase_P85_nSH2"/>
</dbReference>
<dbReference type="InterPro" id="IPR000980">
    <property type="entry name" value="SH2"/>
</dbReference>
<dbReference type="InterPro" id="IPR036860">
    <property type="entry name" value="SH2_dom_sf"/>
</dbReference>
<dbReference type="PANTHER" id="PTHR10155">
    <property type="entry name" value="PHOSPHATIDYLINOSITOL 3-KINASE REGULATORY SUBUNIT"/>
    <property type="match status" value="1"/>
</dbReference>
<dbReference type="PANTHER" id="PTHR10155:SF1">
    <property type="entry name" value="PHOSPHATIDYLINOSITOL 3-KINASE REGULATORY SUBUNIT BETA"/>
    <property type="match status" value="1"/>
</dbReference>
<dbReference type="Pfam" id="PF16454">
    <property type="entry name" value="PI3K_P85_iSH2"/>
    <property type="match status" value="1"/>
</dbReference>
<dbReference type="Pfam" id="PF00017">
    <property type="entry name" value="SH2"/>
    <property type="match status" value="2"/>
</dbReference>
<dbReference type="PRINTS" id="PR00678">
    <property type="entry name" value="PI3KINASEP85"/>
</dbReference>
<dbReference type="PRINTS" id="PR00401">
    <property type="entry name" value="SH2DOMAIN"/>
</dbReference>
<dbReference type="SMART" id="SM00252">
    <property type="entry name" value="SH2"/>
    <property type="match status" value="2"/>
</dbReference>
<dbReference type="SUPFAM" id="SSF55550">
    <property type="entry name" value="SH2 domain"/>
    <property type="match status" value="2"/>
</dbReference>
<dbReference type="PROSITE" id="PS50001">
    <property type="entry name" value="SH2"/>
    <property type="match status" value="2"/>
</dbReference>
<gene>
    <name type="primary">Pik3r3</name>
</gene>